<dbReference type="PIR" id="B01427">
    <property type="entry name" value="YHHU"/>
</dbReference>
<dbReference type="Pharos" id="P69208">
    <property type="development level" value="Tdark"/>
</dbReference>
<dbReference type="GO" id="GO:0005737">
    <property type="term" value="C:cytoplasm"/>
    <property type="evidence" value="ECO:0000250"/>
    <property type="project" value="UniProtKB"/>
</dbReference>
<dbReference type="GO" id="GO:0008083">
    <property type="term" value="F:growth factor activity"/>
    <property type="evidence" value="ECO:0007669"/>
    <property type="project" value="UniProtKB-KW"/>
</dbReference>
<dbReference type="GO" id="GO:0048018">
    <property type="term" value="F:receptor ligand activity"/>
    <property type="evidence" value="ECO:0000250"/>
    <property type="project" value="UniProtKB"/>
</dbReference>
<dbReference type="GO" id="GO:0051301">
    <property type="term" value="P:cell division"/>
    <property type="evidence" value="ECO:0007669"/>
    <property type="project" value="UniProtKB-KW"/>
</dbReference>
<dbReference type="GO" id="GO:0002031">
    <property type="term" value="P:G protein-coupled receptor internalization"/>
    <property type="evidence" value="ECO:0000250"/>
    <property type="project" value="UniProtKB"/>
</dbReference>
<dbReference type="GO" id="GO:0007218">
    <property type="term" value="P:neuropeptide signaling pathway"/>
    <property type="evidence" value="ECO:0000250"/>
    <property type="project" value="UniProtKB"/>
</dbReference>
<dbReference type="GO" id="GO:0090068">
    <property type="term" value="P:positive regulation of cell cycle process"/>
    <property type="evidence" value="ECO:0000314"/>
    <property type="project" value="UniProtKB"/>
</dbReference>
<dbReference type="GO" id="GO:0051044">
    <property type="term" value="P:positive regulation of membrane protein ectodomain proteolysis"/>
    <property type="evidence" value="ECO:0000314"/>
    <property type="project" value="UniProtKB"/>
</dbReference>
<dbReference type="GO" id="GO:2000179">
    <property type="term" value="P:positive regulation of neural precursor cell proliferation"/>
    <property type="evidence" value="ECO:0000314"/>
    <property type="project" value="UniProtKB"/>
</dbReference>
<dbReference type="GO" id="GO:0034394">
    <property type="term" value="P:protein localization to cell surface"/>
    <property type="evidence" value="ECO:0000314"/>
    <property type="project" value="UniProtKB"/>
</dbReference>
<dbReference type="GO" id="GO:0031623">
    <property type="term" value="P:receptor internalization"/>
    <property type="evidence" value="ECO:0000314"/>
    <property type="project" value="UniProtKB"/>
</dbReference>
<protein>
    <recommendedName>
        <fullName>Morphogenetic neuropeptide</fullName>
    </recommendedName>
    <alternativeName>
        <fullName>Head activator</fullName>
        <shortName>HA</shortName>
    </alternativeName>
</protein>
<reference key="1">
    <citation type="journal article" date="1981" name="Nature">
        <title>Conserved amino acid sequence of a neuropeptide, the head activator, from coelenterates to humans.</title>
        <authorList>
            <person name="Bodenmuller H."/>
            <person name="Schaller H.C."/>
        </authorList>
    </citation>
    <scope>PROTEIN SEQUENCE</scope>
    <scope>PYROGLUTAMATE FORMATION AT GLN-1</scope>
</reference>
<reference key="2">
    <citation type="journal article" date="1981" name="FEBS Lett.">
        <title>Synthesis of a new neuropeptide, the head activator from hydra.</title>
        <authorList>
            <person name="Birr C."/>
            <person name="Zachmann B."/>
            <person name="Bodenmuller H."/>
            <person name="Schaller H.C."/>
        </authorList>
    </citation>
    <scope>SYNTHESIS</scope>
</reference>
<reference key="3">
    <citation type="journal article" date="2000" name="J. Cell Sci.">
        <title>Ectodomain shedding, translocation and synthesis of SorLA are stimulated by its ligand head activator.</title>
        <authorList>
            <person name="Hampe W."/>
            <person name="Riedel I.B."/>
            <person name="Lintzel J."/>
            <person name="Bader C.O."/>
            <person name="Franke I."/>
            <person name="Schaller H.C."/>
        </authorList>
    </citation>
    <scope>FUNCTION</scope>
    <scope>INTERACTION WITH SORL1</scope>
</reference>
<reference key="4">
    <citation type="journal article" date="2001" name="J. Biol. Chem.">
        <title>Activation and functional characterization of the mosaic receptor SorLA/LR11.</title>
        <authorList>
            <person name="Jacobsen L."/>
            <person name="Madsen P."/>
            <person name="Jacobsen C."/>
            <person name="Nielsen M.S."/>
            <person name="Gliemann J."/>
            <person name="Petersen C.M."/>
        </authorList>
    </citation>
    <scope>INTERACTION WITH SORL1</scope>
</reference>
<reference key="5">
    <citation type="journal article" date="2002" name="Biol. Chem.">
        <title>Characterization of the VPS10 domain of SorLA/LR11 as binding site for the neuropeptide HA.</title>
        <authorList>
            <person name="Lintzel J."/>
            <person name="Franke I."/>
            <person name="Riedel I.B."/>
            <person name="Schaller H.C."/>
            <person name="Hampe W."/>
        </authorList>
    </citation>
    <scope>INTERACTION WITH SORL1</scope>
</reference>
<evidence type="ECO:0000269" key="1">
    <source>
    </source>
</evidence>
<evidence type="ECO:0000269" key="2">
    <source>
    </source>
</evidence>
<evidence type="ECO:0000269" key="3">
    <source>
    </source>
</evidence>
<evidence type="ECO:0000269" key="4">
    <source>
    </source>
</evidence>
<evidence type="ECO:0000305" key="5"/>
<comment type="function">
    <text evidence="1">Stimulates the proliferation of neural cells.</text>
</comment>
<comment type="subunit">
    <text evidence="1 2 3">May interact with SORL1 (via N-terminal ectodomain); this interaction is impaired in the presence of SORL1 propeptide.</text>
</comment>
<comment type="caution">
    <text evidence="5">This peptide was first isolated from nerve cells of hydra and was called head activator by the authors, because it induced head-specific growth and differentiation in this animal. It has been found in mammalian intestine and hypothalamus. The peptide sequence could not be mapped onto the reference genome.</text>
</comment>
<sequence>QPPGGSKVILF</sequence>
<accession>P69208</accession>
<accession>P01163</accession>
<feature type="peptide" id="PRO_0000044167" description="Morphogenetic neuropeptide">
    <location>
        <begin position="1"/>
        <end position="11"/>
    </location>
</feature>
<feature type="modified residue" description="Pyrrolidone carboxylic acid" evidence="4">
    <location>
        <position position="1"/>
    </location>
</feature>
<proteinExistence type="evidence at protein level"/>
<organism>
    <name type="scientific">Homo sapiens</name>
    <name type="common">Human</name>
    <dbReference type="NCBI Taxonomy" id="9606"/>
    <lineage>
        <taxon>Eukaryota</taxon>
        <taxon>Metazoa</taxon>
        <taxon>Chordata</taxon>
        <taxon>Craniata</taxon>
        <taxon>Vertebrata</taxon>
        <taxon>Euteleostomi</taxon>
        <taxon>Mammalia</taxon>
        <taxon>Eutheria</taxon>
        <taxon>Euarchontoglires</taxon>
        <taxon>Primates</taxon>
        <taxon>Haplorrhini</taxon>
        <taxon>Catarrhini</taxon>
        <taxon>Hominidae</taxon>
        <taxon>Homo</taxon>
    </lineage>
</organism>
<name>MORN_HUMAN</name>
<keyword id="KW-0131">Cell cycle</keyword>
<keyword id="KW-0132">Cell division</keyword>
<keyword id="KW-0903">Direct protein sequencing</keyword>
<keyword id="KW-0339">Growth factor</keyword>
<keyword id="KW-0498">Mitosis</keyword>
<keyword id="KW-0873">Pyrrolidone carboxylic acid</keyword>